<feature type="chain" id="PRO_0000121657" description="tRNA-specific 2-thiouridylase MnmA">
    <location>
        <begin position="1"/>
        <end position="367"/>
    </location>
</feature>
<feature type="region of interest" description="Interaction with target base in tRNA" evidence="1">
    <location>
        <begin position="99"/>
        <end position="101"/>
    </location>
</feature>
<feature type="region of interest" description="Interaction with tRNA" evidence="1">
    <location>
        <begin position="150"/>
        <end position="152"/>
    </location>
</feature>
<feature type="region of interest" description="Interaction with tRNA" evidence="1">
    <location>
        <begin position="307"/>
        <end position="308"/>
    </location>
</feature>
<feature type="active site" description="Nucleophile" evidence="1">
    <location>
        <position position="104"/>
    </location>
</feature>
<feature type="active site" description="Cysteine persulfide intermediate" evidence="1">
    <location>
        <position position="200"/>
    </location>
</feature>
<feature type="binding site" evidence="1">
    <location>
        <begin position="13"/>
        <end position="20"/>
    </location>
    <ligand>
        <name>ATP</name>
        <dbReference type="ChEBI" id="CHEBI:30616"/>
    </ligand>
</feature>
<feature type="binding site" evidence="1">
    <location>
        <position position="39"/>
    </location>
    <ligand>
        <name>ATP</name>
        <dbReference type="ChEBI" id="CHEBI:30616"/>
    </ligand>
</feature>
<feature type="binding site" evidence="1">
    <location>
        <position position="128"/>
    </location>
    <ligand>
        <name>ATP</name>
        <dbReference type="ChEBI" id="CHEBI:30616"/>
    </ligand>
</feature>
<feature type="site" description="Interaction with tRNA" evidence="1">
    <location>
        <position position="129"/>
    </location>
</feature>
<feature type="site" description="Interaction with tRNA" evidence="1">
    <location>
        <position position="340"/>
    </location>
</feature>
<feature type="disulfide bond" description="Alternate" evidence="1">
    <location>
        <begin position="104"/>
        <end position="200"/>
    </location>
</feature>
<organism>
    <name type="scientific">Neisseria gonorrhoeae (strain ATCC 700825 / FA 1090)</name>
    <dbReference type="NCBI Taxonomy" id="242231"/>
    <lineage>
        <taxon>Bacteria</taxon>
        <taxon>Pseudomonadati</taxon>
        <taxon>Pseudomonadota</taxon>
        <taxon>Betaproteobacteria</taxon>
        <taxon>Neisseriales</taxon>
        <taxon>Neisseriaceae</taxon>
        <taxon>Neisseria</taxon>
    </lineage>
</organism>
<keyword id="KW-0067">ATP-binding</keyword>
<keyword id="KW-0963">Cytoplasm</keyword>
<keyword id="KW-1015">Disulfide bond</keyword>
<keyword id="KW-0547">Nucleotide-binding</keyword>
<keyword id="KW-1185">Reference proteome</keyword>
<keyword id="KW-0694">RNA-binding</keyword>
<keyword id="KW-0808">Transferase</keyword>
<keyword id="KW-0819">tRNA processing</keyword>
<keyword id="KW-0820">tRNA-binding</keyword>
<protein>
    <recommendedName>
        <fullName evidence="1">tRNA-specific 2-thiouridylase MnmA</fullName>
        <ecNumber evidence="1">2.8.1.13</ecNumber>
    </recommendedName>
</protein>
<gene>
    <name evidence="1" type="primary">mnmA</name>
    <name type="synonym">trmU</name>
    <name type="ordered locus">NGO_1214</name>
</gene>
<comment type="function">
    <text evidence="1">Catalyzes the 2-thiolation of uridine at the wobble position (U34) of tRNA, leading to the formation of s(2)U34.</text>
</comment>
<comment type="catalytic activity">
    <reaction evidence="1">
        <text>S-sulfanyl-L-cysteinyl-[protein] + uridine(34) in tRNA + AH2 + ATP = 2-thiouridine(34) in tRNA + L-cysteinyl-[protein] + A + AMP + diphosphate + H(+)</text>
        <dbReference type="Rhea" id="RHEA:47032"/>
        <dbReference type="Rhea" id="RHEA-COMP:10131"/>
        <dbReference type="Rhea" id="RHEA-COMP:11726"/>
        <dbReference type="Rhea" id="RHEA-COMP:11727"/>
        <dbReference type="Rhea" id="RHEA-COMP:11728"/>
        <dbReference type="ChEBI" id="CHEBI:13193"/>
        <dbReference type="ChEBI" id="CHEBI:15378"/>
        <dbReference type="ChEBI" id="CHEBI:17499"/>
        <dbReference type="ChEBI" id="CHEBI:29950"/>
        <dbReference type="ChEBI" id="CHEBI:30616"/>
        <dbReference type="ChEBI" id="CHEBI:33019"/>
        <dbReference type="ChEBI" id="CHEBI:61963"/>
        <dbReference type="ChEBI" id="CHEBI:65315"/>
        <dbReference type="ChEBI" id="CHEBI:87170"/>
        <dbReference type="ChEBI" id="CHEBI:456215"/>
        <dbReference type="EC" id="2.8.1.13"/>
    </reaction>
</comment>
<comment type="subcellular location">
    <subcellularLocation>
        <location evidence="1">Cytoplasm</location>
    </subcellularLocation>
</comment>
<comment type="similarity">
    <text evidence="1">Belongs to the MnmA/TRMU family.</text>
</comment>
<evidence type="ECO:0000255" key="1">
    <source>
        <dbReference type="HAMAP-Rule" id="MF_00144"/>
    </source>
</evidence>
<reference key="1">
    <citation type="submission" date="2003-03" db="EMBL/GenBank/DDBJ databases">
        <title>The complete genome sequence of Neisseria gonorrhoeae.</title>
        <authorList>
            <person name="Lewis L.A."/>
            <person name="Gillaspy A.F."/>
            <person name="McLaughlin R.E."/>
            <person name="Gipson M."/>
            <person name="Ducey T.F."/>
            <person name="Ownbey T."/>
            <person name="Hartman K."/>
            <person name="Nydick C."/>
            <person name="Carson M.B."/>
            <person name="Vaughn J."/>
            <person name="Thomson C."/>
            <person name="Song L."/>
            <person name="Lin S."/>
            <person name="Yuan X."/>
            <person name="Najar F."/>
            <person name="Zhan M."/>
            <person name="Ren Q."/>
            <person name="Zhu H."/>
            <person name="Qi S."/>
            <person name="Kenton S.M."/>
            <person name="Lai H."/>
            <person name="White J.D."/>
            <person name="Clifton S."/>
            <person name="Roe B.A."/>
            <person name="Dyer D.W."/>
        </authorList>
    </citation>
    <scope>NUCLEOTIDE SEQUENCE [LARGE SCALE GENOMIC DNA]</scope>
    <source>
        <strain>ATCC 700825 / FA 1090</strain>
    </source>
</reference>
<name>MNMA_NEIG1</name>
<accession>Q5F7G4</accession>
<proteinExistence type="inferred from homology"/>
<sequence>MNTTSNTSNIIVGLSGGVDSSVTAALLKQQGYQVRGVFMQNWENDDNDEYCSIKQDSFDAIAVADIVGIDIDIVNFAAQYKDKVFAYFLQEYSAGRTPNPDVLCNAEIKFKCFLDYAVGQGADTIATGHYARKEARNGVHYLLKGLDRNKDQSYFLYRLKPFQLERAIFPLGGLEKPEVRRLAAEFNLPTAAKKDSTGICFIGERPFREFLQKYLPTDNGKMVTPEGKTIGEHVGLMFYTLGQRKGLGIGGAGEPWFVAAKDLTKNELIVVQGHDHPLLYTRSLVMNDLSFTLPERPKAGRYTCKTRYRMADAPCELCYLDDETAELVFDEPQWAVTPGQSAVLYDVDICLGGGIIQTTDKPVIITR</sequence>
<dbReference type="EC" id="2.8.1.13" evidence="1"/>
<dbReference type="EMBL" id="AE004969">
    <property type="protein sequence ID" value="AAW89873.2"/>
    <property type="molecule type" value="Genomic_DNA"/>
</dbReference>
<dbReference type="RefSeq" id="WP_025456505.1">
    <property type="nucleotide sequence ID" value="NC_002946.2"/>
</dbReference>
<dbReference type="SMR" id="Q5F7G4"/>
<dbReference type="STRING" id="242231.NGO_1214"/>
<dbReference type="KEGG" id="ngo:NGO_1214"/>
<dbReference type="HOGENOM" id="CLU_035188_1_0_4"/>
<dbReference type="Proteomes" id="UP000000535">
    <property type="component" value="Chromosome"/>
</dbReference>
<dbReference type="GO" id="GO:0005737">
    <property type="term" value="C:cytoplasm"/>
    <property type="evidence" value="ECO:0007669"/>
    <property type="project" value="UniProtKB-SubCell"/>
</dbReference>
<dbReference type="GO" id="GO:0005524">
    <property type="term" value="F:ATP binding"/>
    <property type="evidence" value="ECO:0007669"/>
    <property type="project" value="UniProtKB-KW"/>
</dbReference>
<dbReference type="GO" id="GO:0000049">
    <property type="term" value="F:tRNA binding"/>
    <property type="evidence" value="ECO:0007669"/>
    <property type="project" value="UniProtKB-KW"/>
</dbReference>
<dbReference type="GO" id="GO:0103016">
    <property type="term" value="F:tRNA-uridine 2-sulfurtransferase activity"/>
    <property type="evidence" value="ECO:0007669"/>
    <property type="project" value="UniProtKB-EC"/>
</dbReference>
<dbReference type="GO" id="GO:0002143">
    <property type="term" value="P:tRNA wobble position uridine thiolation"/>
    <property type="evidence" value="ECO:0007669"/>
    <property type="project" value="TreeGrafter"/>
</dbReference>
<dbReference type="CDD" id="cd01998">
    <property type="entry name" value="MnmA_TRMU-like"/>
    <property type="match status" value="1"/>
</dbReference>
<dbReference type="FunFam" id="2.30.30.280:FF:000001">
    <property type="entry name" value="tRNA-specific 2-thiouridylase MnmA"/>
    <property type="match status" value="1"/>
</dbReference>
<dbReference type="FunFam" id="2.40.30.10:FF:000023">
    <property type="entry name" value="tRNA-specific 2-thiouridylase MnmA"/>
    <property type="match status" value="1"/>
</dbReference>
<dbReference type="FunFam" id="3.40.50.620:FF:000004">
    <property type="entry name" value="tRNA-specific 2-thiouridylase MnmA"/>
    <property type="match status" value="1"/>
</dbReference>
<dbReference type="Gene3D" id="2.30.30.280">
    <property type="entry name" value="Adenine nucleotide alpha hydrolases-like domains"/>
    <property type="match status" value="1"/>
</dbReference>
<dbReference type="Gene3D" id="3.40.50.620">
    <property type="entry name" value="HUPs"/>
    <property type="match status" value="1"/>
</dbReference>
<dbReference type="Gene3D" id="2.40.30.10">
    <property type="entry name" value="Translation factors"/>
    <property type="match status" value="1"/>
</dbReference>
<dbReference type="HAMAP" id="MF_00144">
    <property type="entry name" value="tRNA_thiouridyl_MnmA"/>
    <property type="match status" value="1"/>
</dbReference>
<dbReference type="InterPro" id="IPR004506">
    <property type="entry name" value="MnmA-like"/>
</dbReference>
<dbReference type="InterPro" id="IPR046885">
    <property type="entry name" value="MnmA-like_C"/>
</dbReference>
<dbReference type="InterPro" id="IPR046884">
    <property type="entry name" value="MnmA-like_central"/>
</dbReference>
<dbReference type="InterPro" id="IPR023382">
    <property type="entry name" value="MnmA-like_central_sf"/>
</dbReference>
<dbReference type="InterPro" id="IPR014729">
    <property type="entry name" value="Rossmann-like_a/b/a_fold"/>
</dbReference>
<dbReference type="NCBIfam" id="NF001138">
    <property type="entry name" value="PRK00143.1"/>
    <property type="match status" value="1"/>
</dbReference>
<dbReference type="NCBIfam" id="TIGR00420">
    <property type="entry name" value="trmU"/>
    <property type="match status" value="1"/>
</dbReference>
<dbReference type="PANTHER" id="PTHR11933:SF5">
    <property type="entry name" value="MITOCHONDRIAL TRNA-SPECIFIC 2-THIOURIDYLASE 1"/>
    <property type="match status" value="1"/>
</dbReference>
<dbReference type="PANTHER" id="PTHR11933">
    <property type="entry name" value="TRNA 5-METHYLAMINOMETHYL-2-THIOURIDYLATE -METHYLTRANSFERASE"/>
    <property type="match status" value="1"/>
</dbReference>
<dbReference type="Pfam" id="PF03054">
    <property type="entry name" value="tRNA_Me_trans"/>
    <property type="match status" value="1"/>
</dbReference>
<dbReference type="Pfam" id="PF20258">
    <property type="entry name" value="tRNA_Me_trans_C"/>
    <property type="match status" value="1"/>
</dbReference>
<dbReference type="Pfam" id="PF20259">
    <property type="entry name" value="tRNA_Me_trans_M"/>
    <property type="match status" value="1"/>
</dbReference>
<dbReference type="SUPFAM" id="SSF52402">
    <property type="entry name" value="Adenine nucleotide alpha hydrolases-like"/>
    <property type="match status" value="1"/>
</dbReference>